<gene>
    <name type="ordered locus">MIMI_L55</name>
</gene>
<evidence type="ECO:0000305" key="1"/>
<organismHost>
    <name type="scientific">Acanthamoeba polyphaga</name>
    <name type="common">Amoeba</name>
    <dbReference type="NCBI Taxonomy" id="5757"/>
</organismHost>
<comment type="similarity">
    <text evidence="1">Belongs to the mimivirus BTB/WD family.</text>
</comment>
<accession>Q5UPC7</accession>
<keyword id="KW-1185">Reference proteome</keyword>
<protein>
    <recommendedName>
        <fullName>Putative BTB/POZ domain-containing protein L55</fullName>
    </recommendedName>
</protein>
<reference key="1">
    <citation type="journal article" date="2004" name="Science">
        <title>The 1.2-megabase genome sequence of Mimivirus.</title>
        <authorList>
            <person name="Raoult D."/>
            <person name="Audic S."/>
            <person name="Robert C."/>
            <person name="Abergel C."/>
            <person name="Renesto P."/>
            <person name="Ogata H."/>
            <person name="La Scola B."/>
            <person name="Susan M."/>
            <person name="Claverie J.-M."/>
        </authorList>
    </citation>
    <scope>NUCLEOTIDE SEQUENCE [LARGE SCALE GENOMIC DNA]</scope>
    <source>
        <strain>Rowbotham-Bradford</strain>
    </source>
</reference>
<dbReference type="EMBL" id="AY653733">
    <property type="protein sequence ID" value="AAV50330.1"/>
    <property type="molecule type" value="Genomic_DNA"/>
</dbReference>
<dbReference type="KEGG" id="vg:9924643"/>
<dbReference type="Proteomes" id="UP000001134">
    <property type="component" value="Genome"/>
</dbReference>
<dbReference type="InterPro" id="IPR036322">
    <property type="entry name" value="WD40_repeat_dom_sf"/>
</dbReference>
<dbReference type="SUPFAM" id="SSF50978">
    <property type="entry name" value="WD40 repeat-like"/>
    <property type="match status" value="1"/>
</dbReference>
<name>YL055_MIMIV</name>
<feature type="chain" id="PRO_0000186223" description="Putative BTB/POZ domain-containing protein L55">
    <location>
        <begin position="1"/>
        <end position="513"/>
    </location>
</feature>
<feature type="domain" description="BTB">
    <location>
        <begin position="11"/>
        <end position="83"/>
    </location>
</feature>
<sequence>MELENITENLSPIKIILQDIHSDNRVSLTLDKNVLCEKCPFFSKMFKGFKEQFEKIVVVKVPYVDITSKILKNFHGYKMEISDDWKSQIKLYMCYDYLGIKTDFPTKIKVQDYCFDELLDLIELNGYNEQTVKTLVGNLPVDNLEKLPIDFLTVMDQELVDFDIIAIDNNGVVSEVDCTMNTLKKIYEQSDCNFHVQYFEKTQKLMVLSSDNVSTGYNQNTIHTYEYNYKNDNYELKDKQPMTGKKYNHRIGGDRLEEEQQIIGKICFMKCNPEEDKLAFVIFNDGQNKIVTYDLDKKIYREVIRRNHITEICYSSNNKTVHIEKNNSVNSIYYNGILLFSENNILRYICHVNNDVIVFNEHCVNQKLNFVKTTRIPYYGSDIFRPIKNDSFGFNDDKIIYGTENSITDIKYKSDHIFIVSAKTIVVYSIFQSSVIKEICCGATNIKFIDRDRVIAYGINCPTNIYNISTGEKIKNIDYPNIKQLFILNNVKNYALKQRIKAILNSHTLKKLI</sequence>
<organism>
    <name type="scientific">Acanthamoeba polyphaga mimivirus</name>
    <name type="common">APMV</name>
    <dbReference type="NCBI Taxonomy" id="212035"/>
    <lineage>
        <taxon>Viruses</taxon>
        <taxon>Varidnaviria</taxon>
        <taxon>Bamfordvirae</taxon>
        <taxon>Nucleocytoviricota</taxon>
        <taxon>Megaviricetes</taxon>
        <taxon>Imitervirales</taxon>
        <taxon>Mimiviridae</taxon>
        <taxon>Megamimivirinae</taxon>
        <taxon>Mimivirus</taxon>
        <taxon>Mimivirus bradfordmassiliense</taxon>
    </lineage>
</organism>
<proteinExistence type="inferred from homology"/>